<proteinExistence type="predicted"/>
<accession>P15564</accession>
<comment type="subcellular location">
    <subcellularLocation>
        <location evidence="1">Mitochondrion</location>
    </subcellularLocation>
</comment>
<comment type="sequence caution" evidence="1">
    <conflict type="erroneous initiation">
        <sequence resource="EMBL-CDS" id="CAA38807"/>
    </conflict>
</comment>
<name>YMN4_PODAN</name>
<sequence length="449" mass="50867">MSGLLYALLIIPMIGIFFILSFDSYNFNITSNNSNSGSFSEAGAGKNSGGELLKVLVINNELNFYKKIAFITTIMNLIVSLIIYILFDFSTNQFQFVQDALELSVYNIYLGVDGLSIYFVLLTTIIMPIALISNWNSITHNIKAYLIIILLLETLLLAVFLVLDVLLFYIFFESILPPLFILIGLFGSSNKVRASFYIFLYTFNLKCKRAKYRGSPKALVTKVQHESVELAWLMTQGMVKSLVDIWVIAVLSHPCLRTESKQEGVKEQRVDGSSSSRNLEFVRCTLVAGKPVLGRKIHHCPCGPASSKLMKVQGYYNITTQAATYTHPLSTLDPWFITGFVDAEGCFMIGLTKSELYRSGYQVTAIFKISLRRTRKDYTLLCQIRDYFGIGIITKHGETTLQYMVRSIKDLNVILSHFDAYPLFSQKRSDYILFKQAIVLIKNKEHLTK</sequence>
<feature type="chain" id="PRO_0000196898" description="Uncharacterized 50.9 kDa protein in ND4 intron 1">
    <location>
        <begin position="1"/>
        <end position="449"/>
    </location>
</feature>
<dbReference type="EMBL" id="X55026">
    <property type="protein sequence ID" value="CAA38807.1"/>
    <property type="status" value="ALT_INIT"/>
    <property type="molecule type" value="Genomic_DNA"/>
</dbReference>
<dbReference type="EMBL" id="X14484">
    <property type="status" value="NOT_ANNOTATED_CDS"/>
    <property type="molecule type" value="Genomic_DNA"/>
</dbReference>
<dbReference type="PIR" id="S05653">
    <property type="entry name" value="S05653"/>
</dbReference>
<dbReference type="SMR" id="P15564"/>
<dbReference type="STRING" id="515849.P15564"/>
<dbReference type="InParanoid" id="P15564"/>
<dbReference type="Proteomes" id="UP000001197">
    <property type="component" value="Mitochondrion"/>
</dbReference>
<dbReference type="GO" id="GO:0005739">
    <property type="term" value="C:mitochondrion"/>
    <property type="evidence" value="ECO:0007669"/>
    <property type="project" value="UniProtKB-SubCell"/>
</dbReference>
<dbReference type="GO" id="GO:0004519">
    <property type="term" value="F:endonuclease activity"/>
    <property type="evidence" value="ECO:0007669"/>
    <property type="project" value="InterPro"/>
</dbReference>
<dbReference type="GO" id="GO:0008137">
    <property type="term" value="F:NADH dehydrogenase (ubiquinone) activity"/>
    <property type="evidence" value="ECO:0007669"/>
    <property type="project" value="InterPro"/>
</dbReference>
<dbReference type="GO" id="GO:0048039">
    <property type="term" value="F:ubiquinone binding"/>
    <property type="evidence" value="ECO:0007669"/>
    <property type="project" value="TreeGrafter"/>
</dbReference>
<dbReference type="GO" id="GO:0042773">
    <property type="term" value="P:ATP synthesis coupled electron transport"/>
    <property type="evidence" value="ECO:0007669"/>
    <property type="project" value="InterPro"/>
</dbReference>
<dbReference type="GO" id="GO:0015990">
    <property type="term" value="P:electron transport coupled proton transport"/>
    <property type="evidence" value="ECO:0007669"/>
    <property type="project" value="TreeGrafter"/>
</dbReference>
<dbReference type="Gene3D" id="3.10.28.10">
    <property type="entry name" value="Homing endonucleases"/>
    <property type="match status" value="1"/>
</dbReference>
<dbReference type="InterPro" id="IPR027434">
    <property type="entry name" value="Homing_endonucl"/>
</dbReference>
<dbReference type="InterPro" id="IPR004860">
    <property type="entry name" value="LAGLIDADG_dom"/>
</dbReference>
<dbReference type="InterPro" id="IPR003918">
    <property type="entry name" value="NADH_UbQ_OxRdtase"/>
</dbReference>
<dbReference type="InterPro" id="IPR001750">
    <property type="entry name" value="ND/Mrp_TM"/>
</dbReference>
<dbReference type="PANTHER" id="PTHR43507">
    <property type="entry name" value="NADH-UBIQUINONE OXIDOREDUCTASE CHAIN 4"/>
    <property type="match status" value="1"/>
</dbReference>
<dbReference type="PANTHER" id="PTHR43507:SF1">
    <property type="entry name" value="NADH-UBIQUINONE OXIDOREDUCTASE CHAIN 4"/>
    <property type="match status" value="1"/>
</dbReference>
<dbReference type="Pfam" id="PF00961">
    <property type="entry name" value="LAGLIDADG_1"/>
    <property type="match status" value="1"/>
</dbReference>
<dbReference type="Pfam" id="PF00361">
    <property type="entry name" value="Proton_antipo_M"/>
    <property type="match status" value="1"/>
</dbReference>
<dbReference type="SUPFAM" id="SSF55608">
    <property type="entry name" value="Homing endonucleases"/>
    <property type="match status" value="1"/>
</dbReference>
<reference key="1">
    <citation type="journal article" date="1988" name="J. Mol. Biol.">
        <title>Sequence analysis of mitochondrial DNA from Podospora anserina. Pervasiveness of a class I intron in three separate genes.</title>
        <authorList>
            <person name="Cummings D.J."/>
            <person name="Domenico J.M."/>
        </authorList>
    </citation>
    <scope>NUCLEOTIDE SEQUENCE [GENOMIC DNA]</scope>
    <source>
        <strain>A</strain>
        <strain>s</strain>
    </source>
</reference>
<reference key="2">
    <citation type="journal article" date="1990" name="Curr. Genet.">
        <title>The complete DNA sequence of the mitochondrial genome of Podospora anserina.</title>
        <authorList>
            <person name="Cummings D.J."/>
            <person name="McNally K.L."/>
            <person name="Domenico J.M."/>
            <person name="Matsuura E.T."/>
        </authorList>
    </citation>
    <scope>NUCLEOTIDE SEQUENCE [LARGE SCALE GENOMIC DNA]</scope>
    <source>
        <strain>s</strain>
    </source>
</reference>
<protein>
    <recommendedName>
        <fullName>Uncharacterized 50.9 kDa protein in ND4 intron 1</fullName>
    </recommendedName>
</protein>
<keyword id="KW-0496">Mitochondrion</keyword>
<keyword id="KW-1185">Reference proteome</keyword>
<organism>
    <name type="scientific">Podospora anserina (strain S / ATCC MYA-4624 / DSM 980 / FGSC 10383)</name>
    <name type="common">Pleurage anserina</name>
    <dbReference type="NCBI Taxonomy" id="515849"/>
    <lineage>
        <taxon>Eukaryota</taxon>
        <taxon>Fungi</taxon>
        <taxon>Dikarya</taxon>
        <taxon>Ascomycota</taxon>
        <taxon>Pezizomycotina</taxon>
        <taxon>Sordariomycetes</taxon>
        <taxon>Sordariomycetidae</taxon>
        <taxon>Sordariales</taxon>
        <taxon>Podosporaceae</taxon>
        <taxon>Podospora</taxon>
        <taxon>Podospora anserina</taxon>
    </lineage>
</organism>
<evidence type="ECO:0000305" key="1"/>
<geneLocation type="mitochondrion"/>